<accession>P64563</accession>
<accession>P52038</accession>
<organism>
    <name type="scientific">Escherichia coli O6:H1 (strain CFT073 / ATCC 700928 / UPEC)</name>
    <dbReference type="NCBI Taxonomy" id="199310"/>
    <lineage>
        <taxon>Bacteria</taxon>
        <taxon>Pseudomonadati</taxon>
        <taxon>Pseudomonadota</taxon>
        <taxon>Gammaproteobacteria</taxon>
        <taxon>Enterobacterales</taxon>
        <taxon>Enterobacteriaceae</taxon>
        <taxon>Escherichia</taxon>
    </lineage>
</organism>
<gene>
    <name type="primary">yqfE</name>
    <name type="ordered locus">c3496</name>
</gene>
<evidence type="ECO:0000305" key="1"/>
<name>YQFE_ECOL6</name>
<protein>
    <recommendedName>
        <fullName>Uncharacterized protein YqfE</fullName>
    </recommendedName>
</protein>
<dbReference type="EMBL" id="AE014075">
    <property type="protein sequence ID" value="AAN81944.1"/>
    <property type="status" value="ALT_INIT"/>
    <property type="molecule type" value="Genomic_DNA"/>
</dbReference>
<dbReference type="RefSeq" id="WP_000545308.1">
    <property type="nucleotide sequence ID" value="NZ_CP051263.1"/>
</dbReference>
<dbReference type="SMR" id="P64563"/>
<dbReference type="STRING" id="199310.c3496"/>
<dbReference type="KEGG" id="ecc:c3496"/>
<dbReference type="HOGENOM" id="CLU_186699_0_0_6"/>
<dbReference type="Proteomes" id="UP000001410">
    <property type="component" value="Chromosome"/>
</dbReference>
<dbReference type="Gene3D" id="3.40.190.290">
    <property type="match status" value="1"/>
</dbReference>
<dbReference type="InterPro" id="IPR005119">
    <property type="entry name" value="LysR_subst-bd"/>
</dbReference>
<dbReference type="Pfam" id="PF03466">
    <property type="entry name" value="LysR_substrate"/>
    <property type="match status" value="1"/>
</dbReference>
<dbReference type="SUPFAM" id="SSF53850">
    <property type="entry name" value="Periplasmic binding protein-like II"/>
    <property type="match status" value="1"/>
</dbReference>
<proteinExistence type="predicted"/>
<feature type="chain" id="PRO_0000169361" description="Uncharacterized protein YqfE">
    <location>
        <begin position="1"/>
        <end position="76"/>
    </location>
</feature>
<comment type="similarity">
    <text evidence="1">To K.pneumoniae LtrA, E.coli YjiE, and YhcS.</text>
</comment>
<comment type="sequence caution" evidence="1">
    <conflict type="erroneous initiation">
        <sequence resource="EMBL-CDS" id="AAN81944"/>
    </conflict>
</comment>
<keyword id="KW-1185">Reference proteome</keyword>
<reference key="1">
    <citation type="journal article" date="2002" name="Proc. Natl. Acad. Sci. U.S.A.">
        <title>Extensive mosaic structure revealed by the complete genome sequence of uropathogenic Escherichia coli.</title>
        <authorList>
            <person name="Welch R.A."/>
            <person name="Burland V."/>
            <person name="Plunkett G. III"/>
            <person name="Redford P."/>
            <person name="Roesch P."/>
            <person name="Rasko D."/>
            <person name="Buckles E.L."/>
            <person name="Liou S.-R."/>
            <person name="Boutin A."/>
            <person name="Hackett J."/>
            <person name="Stroud D."/>
            <person name="Mayhew G.F."/>
            <person name="Rose D.J."/>
            <person name="Zhou S."/>
            <person name="Schwartz D.C."/>
            <person name="Perna N.T."/>
            <person name="Mobley H.L.T."/>
            <person name="Donnenberg M.S."/>
            <person name="Blattner F.R."/>
        </authorList>
    </citation>
    <scope>NUCLEOTIDE SEQUENCE [LARGE SCALE GENOMIC DNA]</scope>
    <source>
        <strain>CFT073 / ATCC 700928 / UPEC</strain>
    </source>
</reference>
<sequence length="76" mass="8372">MHFAQRVRALVVLNGVALLPQFACKQGLANGELVRLFAPWSGIPRPLYALFAGRKGMPAIARYFMDELTTRLANGV</sequence>